<sequence>MDKQLVLVIDFGGQYNQLIARRVREHNVYCEIVPYTYSIDKIKEKKPSAVIFTGGQNSVYGEDSPRMDKEIFDLGVPVLGICYGHQLITYTLGGEVMGSEIREYGKTDVTLDSVCELFEGIDIENSCWMSHTDRVAKVPEGFKVVGHTNVCPVAAMANTEKKIYGVQFHPEVLHTPFGEQLFSNFLFKICGLKEDWSMSSFAKEKIQEIKDIVGDKKVLCALSGGVDSSVAAVLVHKAIGKQLTCVFVDHGLLRKDEGDQVESIFRKQFDMNLIRVNAKDRFLGKLKGISDPERKRKIIGEEFIRVFEEEANKLGQIDFLVQGTIYPDVVESGTDTSATIKSHHNVGGLPEDMQFELIEPLRELFKDEVRAVGEELGIPHKLVWRQPFPGPGLGIRVLGEVTEEKLEIVREADAIFREEIANAGLEEKIWQYFACLPNIHSVGVMGDGRTYCETIALRAVTSSDAMTSDWARIPYEVLDKVSRRIVNEVKGVNRIVYDVTSKPPATIEWE</sequence>
<comment type="function">
    <text evidence="1">Catalyzes the synthesis of GMP from XMP.</text>
</comment>
<comment type="catalytic activity">
    <reaction evidence="1">
        <text>XMP + L-glutamine + ATP + H2O = GMP + L-glutamate + AMP + diphosphate + 2 H(+)</text>
        <dbReference type="Rhea" id="RHEA:11680"/>
        <dbReference type="ChEBI" id="CHEBI:15377"/>
        <dbReference type="ChEBI" id="CHEBI:15378"/>
        <dbReference type="ChEBI" id="CHEBI:29985"/>
        <dbReference type="ChEBI" id="CHEBI:30616"/>
        <dbReference type="ChEBI" id="CHEBI:33019"/>
        <dbReference type="ChEBI" id="CHEBI:57464"/>
        <dbReference type="ChEBI" id="CHEBI:58115"/>
        <dbReference type="ChEBI" id="CHEBI:58359"/>
        <dbReference type="ChEBI" id="CHEBI:456215"/>
        <dbReference type="EC" id="6.3.5.2"/>
    </reaction>
</comment>
<comment type="pathway">
    <text evidence="1">Purine metabolism; GMP biosynthesis; GMP from XMP (L-Gln route): step 1/1.</text>
</comment>
<comment type="subunit">
    <text evidence="1">Homodimer.</text>
</comment>
<name>GUAA_CLOAB</name>
<gene>
    <name evidence="1" type="primary">guaA</name>
    <name type="ordered locus">CA_C2700</name>
</gene>
<reference key="1">
    <citation type="journal article" date="2001" name="J. Bacteriol.">
        <title>Genome sequence and comparative analysis of the solvent-producing bacterium Clostridium acetobutylicum.</title>
        <authorList>
            <person name="Noelling J."/>
            <person name="Breton G."/>
            <person name="Omelchenko M.V."/>
            <person name="Makarova K.S."/>
            <person name="Zeng Q."/>
            <person name="Gibson R."/>
            <person name="Lee H.M."/>
            <person name="Dubois J."/>
            <person name="Qiu D."/>
            <person name="Hitti J."/>
            <person name="Wolf Y.I."/>
            <person name="Tatusov R.L."/>
            <person name="Sabathe F."/>
            <person name="Doucette-Stamm L.A."/>
            <person name="Soucaille P."/>
            <person name="Daly M.J."/>
            <person name="Bennett G.N."/>
            <person name="Koonin E.V."/>
            <person name="Smith D.R."/>
        </authorList>
    </citation>
    <scope>NUCLEOTIDE SEQUENCE [LARGE SCALE GENOMIC DNA]</scope>
    <source>
        <strain>ATCC 824 / DSM 792 / JCM 1419 / IAM 19013 / LMG 5710 / NBRC 13948 / NRRL B-527 / VKM B-1787 / 2291 / W</strain>
    </source>
</reference>
<evidence type="ECO:0000255" key="1">
    <source>
        <dbReference type="HAMAP-Rule" id="MF_00344"/>
    </source>
</evidence>
<proteinExistence type="inferred from homology"/>
<dbReference type="EC" id="6.3.5.2" evidence="1"/>
<dbReference type="EMBL" id="AE001437">
    <property type="protein sequence ID" value="AAK80646.1"/>
    <property type="molecule type" value="Genomic_DNA"/>
</dbReference>
<dbReference type="PIR" id="C97232">
    <property type="entry name" value="C97232"/>
</dbReference>
<dbReference type="RefSeq" id="NP_349306.1">
    <property type="nucleotide sequence ID" value="NC_003030.1"/>
</dbReference>
<dbReference type="RefSeq" id="WP_010965987.1">
    <property type="nucleotide sequence ID" value="NC_003030.1"/>
</dbReference>
<dbReference type="SMR" id="Q97FM9"/>
<dbReference type="STRING" id="272562.CA_C2700"/>
<dbReference type="GeneID" id="44999189"/>
<dbReference type="KEGG" id="cac:CA_C2700"/>
<dbReference type="PATRIC" id="fig|272562.8.peg.2890"/>
<dbReference type="eggNOG" id="COG0518">
    <property type="taxonomic scope" value="Bacteria"/>
</dbReference>
<dbReference type="eggNOG" id="COG0519">
    <property type="taxonomic scope" value="Bacteria"/>
</dbReference>
<dbReference type="HOGENOM" id="CLU_014340_0_5_9"/>
<dbReference type="OrthoDB" id="9802219at2"/>
<dbReference type="UniPathway" id="UPA00189">
    <property type="reaction ID" value="UER00296"/>
</dbReference>
<dbReference type="Proteomes" id="UP000000814">
    <property type="component" value="Chromosome"/>
</dbReference>
<dbReference type="GO" id="GO:0005829">
    <property type="term" value="C:cytosol"/>
    <property type="evidence" value="ECO:0007669"/>
    <property type="project" value="TreeGrafter"/>
</dbReference>
<dbReference type="GO" id="GO:0005524">
    <property type="term" value="F:ATP binding"/>
    <property type="evidence" value="ECO:0007669"/>
    <property type="project" value="UniProtKB-UniRule"/>
</dbReference>
<dbReference type="GO" id="GO:0003921">
    <property type="term" value="F:GMP synthase activity"/>
    <property type="evidence" value="ECO:0007669"/>
    <property type="project" value="InterPro"/>
</dbReference>
<dbReference type="CDD" id="cd01742">
    <property type="entry name" value="GATase1_GMP_Synthase"/>
    <property type="match status" value="1"/>
</dbReference>
<dbReference type="CDD" id="cd01997">
    <property type="entry name" value="GMP_synthase_C"/>
    <property type="match status" value="1"/>
</dbReference>
<dbReference type="FunFam" id="3.30.300.10:FF:000002">
    <property type="entry name" value="GMP synthase [glutamine-hydrolyzing]"/>
    <property type="match status" value="1"/>
</dbReference>
<dbReference type="FunFam" id="3.40.50.620:FF:000001">
    <property type="entry name" value="GMP synthase [glutamine-hydrolyzing]"/>
    <property type="match status" value="1"/>
</dbReference>
<dbReference type="FunFam" id="3.40.50.880:FF:000001">
    <property type="entry name" value="GMP synthase [glutamine-hydrolyzing]"/>
    <property type="match status" value="1"/>
</dbReference>
<dbReference type="Gene3D" id="3.30.300.10">
    <property type="match status" value="1"/>
</dbReference>
<dbReference type="Gene3D" id="3.40.50.880">
    <property type="match status" value="1"/>
</dbReference>
<dbReference type="Gene3D" id="3.40.50.620">
    <property type="entry name" value="HUPs"/>
    <property type="match status" value="1"/>
</dbReference>
<dbReference type="HAMAP" id="MF_00344">
    <property type="entry name" value="GMP_synthase"/>
    <property type="match status" value="1"/>
</dbReference>
<dbReference type="InterPro" id="IPR029062">
    <property type="entry name" value="Class_I_gatase-like"/>
</dbReference>
<dbReference type="InterPro" id="IPR017926">
    <property type="entry name" value="GATASE"/>
</dbReference>
<dbReference type="InterPro" id="IPR001674">
    <property type="entry name" value="GMP_synth_C"/>
</dbReference>
<dbReference type="InterPro" id="IPR004739">
    <property type="entry name" value="GMP_synth_GATase"/>
</dbReference>
<dbReference type="InterPro" id="IPR022955">
    <property type="entry name" value="GMP_synthase"/>
</dbReference>
<dbReference type="InterPro" id="IPR025777">
    <property type="entry name" value="GMPS_ATP_PPase_dom"/>
</dbReference>
<dbReference type="InterPro" id="IPR022310">
    <property type="entry name" value="NAD/GMP_synthase"/>
</dbReference>
<dbReference type="InterPro" id="IPR014729">
    <property type="entry name" value="Rossmann-like_a/b/a_fold"/>
</dbReference>
<dbReference type="NCBIfam" id="TIGR00884">
    <property type="entry name" value="guaA_Cterm"/>
    <property type="match status" value="1"/>
</dbReference>
<dbReference type="NCBIfam" id="TIGR00888">
    <property type="entry name" value="guaA_Nterm"/>
    <property type="match status" value="1"/>
</dbReference>
<dbReference type="NCBIfam" id="NF000848">
    <property type="entry name" value="PRK00074.1"/>
    <property type="match status" value="1"/>
</dbReference>
<dbReference type="PANTHER" id="PTHR11922:SF2">
    <property type="entry name" value="GMP SYNTHASE [GLUTAMINE-HYDROLYZING]"/>
    <property type="match status" value="1"/>
</dbReference>
<dbReference type="PANTHER" id="PTHR11922">
    <property type="entry name" value="GMP SYNTHASE-RELATED"/>
    <property type="match status" value="1"/>
</dbReference>
<dbReference type="Pfam" id="PF00117">
    <property type="entry name" value="GATase"/>
    <property type="match status" value="1"/>
</dbReference>
<dbReference type="Pfam" id="PF00958">
    <property type="entry name" value="GMP_synt_C"/>
    <property type="match status" value="1"/>
</dbReference>
<dbReference type="Pfam" id="PF02540">
    <property type="entry name" value="NAD_synthase"/>
    <property type="match status" value="1"/>
</dbReference>
<dbReference type="PRINTS" id="PR00097">
    <property type="entry name" value="ANTSNTHASEII"/>
</dbReference>
<dbReference type="PRINTS" id="PR00099">
    <property type="entry name" value="CPSGATASE"/>
</dbReference>
<dbReference type="PRINTS" id="PR00096">
    <property type="entry name" value="GATASE"/>
</dbReference>
<dbReference type="SUPFAM" id="SSF52402">
    <property type="entry name" value="Adenine nucleotide alpha hydrolases-like"/>
    <property type="match status" value="1"/>
</dbReference>
<dbReference type="SUPFAM" id="SSF52317">
    <property type="entry name" value="Class I glutamine amidotransferase-like"/>
    <property type="match status" value="1"/>
</dbReference>
<dbReference type="PROSITE" id="PS51273">
    <property type="entry name" value="GATASE_TYPE_1"/>
    <property type="match status" value="1"/>
</dbReference>
<dbReference type="PROSITE" id="PS51553">
    <property type="entry name" value="GMPS_ATP_PPASE"/>
    <property type="match status" value="1"/>
</dbReference>
<organism>
    <name type="scientific">Clostridium acetobutylicum (strain ATCC 824 / DSM 792 / JCM 1419 / IAM 19013 / LMG 5710 / NBRC 13948 / NRRL B-527 / VKM B-1787 / 2291 / W)</name>
    <dbReference type="NCBI Taxonomy" id="272562"/>
    <lineage>
        <taxon>Bacteria</taxon>
        <taxon>Bacillati</taxon>
        <taxon>Bacillota</taxon>
        <taxon>Clostridia</taxon>
        <taxon>Eubacteriales</taxon>
        <taxon>Clostridiaceae</taxon>
        <taxon>Clostridium</taxon>
    </lineage>
</organism>
<keyword id="KW-0067">ATP-binding</keyword>
<keyword id="KW-0315">Glutamine amidotransferase</keyword>
<keyword id="KW-0332">GMP biosynthesis</keyword>
<keyword id="KW-0436">Ligase</keyword>
<keyword id="KW-0547">Nucleotide-binding</keyword>
<keyword id="KW-0658">Purine biosynthesis</keyword>
<keyword id="KW-1185">Reference proteome</keyword>
<feature type="chain" id="PRO_0000140113" description="GMP synthase [glutamine-hydrolyzing]">
    <location>
        <begin position="1"/>
        <end position="510"/>
    </location>
</feature>
<feature type="domain" description="Glutamine amidotransferase type-1" evidence="1">
    <location>
        <begin position="5"/>
        <end position="195"/>
    </location>
</feature>
<feature type="domain" description="GMPS ATP-PPase" evidence="1">
    <location>
        <begin position="196"/>
        <end position="385"/>
    </location>
</feature>
<feature type="active site" description="Nucleophile" evidence="1">
    <location>
        <position position="82"/>
    </location>
</feature>
<feature type="active site" evidence="1">
    <location>
        <position position="169"/>
    </location>
</feature>
<feature type="active site" evidence="1">
    <location>
        <position position="171"/>
    </location>
</feature>
<feature type="binding site" evidence="1">
    <location>
        <begin position="223"/>
        <end position="229"/>
    </location>
    <ligand>
        <name>ATP</name>
        <dbReference type="ChEBI" id="CHEBI:30616"/>
    </ligand>
</feature>
<accession>Q97FM9</accession>
<protein>
    <recommendedName>
        <fullName evidence="1">GMP synthase [glutamine-hydrolyzing]</fullName>
        <ecNumber evidence="1">6.3.5.2</ecNumber>
    </recommendedName>
    <alternativeName>
        <fullName evidence="1">GMP synthetase</fullName>
    </alternativeName>
    <alternativeName>
        <fullName evidence="1">Glutamine amidotransferase</fullName>
    </alternativeName>
</protein>